<sequence length="470" mass="48260">MSLLVVGLNHRTAPTSLLEQASVSGDDTPKVLHDLAAAAHVNEAVVLSTCNRTEIYADVETFHGGVADISDQLSRISGIDLGDLAGHLYVHHDARAVGHLFSVVCGLDSMLVGESQILGQVRGAFRTGQSAGVAGSALSGLFQAALRVGKRAHSETSIDAAGASIVAVGIRLAASSLGILSEVPAVPVAPPGGVAGELGGAAVLAAPVAEPPPLAGARVLLIGAGAVGSLAAQTARRAGATEIVIANRTPARAARVAEMHDGRAVGLTDLPHEILMADLVISSTGATGLVVDHDLVAAALPGRGGRPLVFLDLALPHDIDPGVRALPGVSLIDLEALRVALDGAQVAHDVEAVRALVSTEVAGFLDRRRAGRVAPTVVALRAHADSVVHGELARLHSRLPDLDDREWELVEGAVRRVVDKLLHAPTVRVQQLAGAPGGDSYAEALRELFDLPREVPAVVSAPDLDLVERS</sequence>
<keyword id="KW-0521">NADP</keyword>
<keyword id="KW-0560">Oxidoreductase</keyword>
<keyword id="KW-0627">Porphyrin biosynthesis</keyword>
<keyword id="KW-1185">Reference proteome</keyword>
<protein>
    <recommendedName>
        <fullName evidence="1">Glutamyl-tRNA reductase</fullName>
        <shortName evidence="1">GluTR</shortName>
        <ecNumber evidence="1">1.2.1.70</ecNumber>
    </recommendedName>
</protein>
<evidence type="ECO:0000255" key="1">
    <source>
        <dbReference type="HAMAP-Rule" id="MF_00087"/>
    </source>
</evidence>
<evidence type="ECO:0000305" key="2"/>
<name>HEM1_FRAAA</name>
<reference key="1">
    <citation type="journal article" date="2007" name="Genome Res.">
        <title>Genome characteristics of facultatively symbiotic Frankia sp. strains reflect host range and host plant biogeography.</title>
        <authorList>
            <person name="Normand P."/>
            <person name="Lapierre P."/>
            <person name="Tisa L.S."/>
            <person name="Gogarten J.P."/>
            <person name="Alloisio N."/>
            <person name="Bagnarol E."/>
            <person name="Bassi C.A."/>
            <person name="Berry A.M."/>
            <person name="Bickhart D.M."/>
            <person name="Choisne N."/>
            <person name="Couloux A."/>
            <person name="Cournoyer B."/>
            <person name="Cruveiller S."/>
            <person name="Daubin V."/>
            <person name="Demange N."/>
            <person name="Francino M.P."/>
            <person name="Goltsman E."/>
            <person name="Huang Y."/>
            <person name="Kopp O.R."/>
            <person name="Labarre L."/>
            <person name="Lapidus A."/>
            <person name="Lavire C."/>
            <person name="Marechal J."/>
            <person name="Martinez M."/>
            <person name="Mastronunzio J.E."/>
            <person name="Mullin B.C."/>
            <person name="Niemann J."/>
            <person name="Pujic P."/>
            <person name="Rawnsley T."/>
            <person name="Rouy Z."/>
            <person name="Schenowitz C."/>
            <person name="Sellstedt A."/>
            <person name="Tavares F."/>
            <person name="Tomkins J.P."/>
            <person name="Vallenet D."/>
            <person name="Valverde C."/>
            <person name="Wall L.G."/>
            <person name="Wang Y."/>
            <person name="Medigue C."/>
            <person name="Benson D.R."/>
        </authorList>
    </citation>
    <scope>NUCLEOTIDE SEQUENCE [LARGE SCALE GENOMIC DNA]</scope>
    <source>
        <strain>DSM 45986 / CECT 9034 / ACN14a</strain>
    </source>
</reference>
<gene>
    <name evidence="1" type="primary">hemA</name>
    <name type="ordered locus">FRAAL0983</name>
</gene>
<comment type="function">
    <text evidence="1">Catalyzes the NADPH-dependent reduction of glutamyl-tRNA(Glu) to glutamate 1-semialdehyde (GSA).</text>
</comment>
<comment type="catalytic activity">
    <reaction evidence="1">
        <text>(S)-4-amino-5-oxopentanoate + tRNA(Glu) + NADP(+) = L-glutamyl-tRNA(Glu) + NADPH + H(+)</text>
        <dbReference type="Rhea" id="RHEA:12344"/>
        <dbReference type="Rhea" id="RHEA-COMP:9663"/>
        <dbReference type="Rhea" id="RHEA-COMP:9680"/>
        <dbReference type="ChEBI" id="CHEBI:15378"/>
        <dbReference type="ChEBI" id="CHEBI:57501"/>
        <dbReference type="ChEBI" id="CHEBI:57783"/>
        <dbReference type="ChEBI" id="CHEBI:58349"/>
        <dbReference type="ChEBI" id="CHEBI:78442"/>
        <dbReference type="ChEBI" id="CHEBI:78520"/>
        <dbReference type="EC" id="1.2.1.70"/>
    </reaction>
</comment>
<comment type="pathway">
    <text evidence="1">Porphyrin-containing compound metabolism; protoporphyrin-IX biosynthesis; 5-aminolevulinate from L-glutamyl-tRNA(Glu): step 1/2.</text>
</comment>
<comment type="subunit">
    <text evidence="1">Homodimer.</text>
</comment>
<comment type="domain">
    <text evidence="1">Possesses an unusual extended V-shaped dimeric structure with each monomer consisting of three distinct domains arranged along a curved 'spinal' alpha-helix. The N-terminal catalytic domain specifically recognizes the glutamate moiety of the substrate. The second domain is the NADPH-binding domain, and the third C-terminal domain is responsible for dimerization.</text>
</comment>
<comment type="miscellaneous">
    <text evidence="1">During catalysis, the active site Cys acts as a nucleophile attacking the alpha-carbonyl group of tRNA-bound glutamate with the formation of a thioester intermediate between enzyme and glutamate, and the concomitant release of tRNA(Glu). The thioester intermediate is finally reduced by direct hydride transfer from NADPH, to form the product GSA.</text>
</comment>
<comment type="similarity">
    <text evidence="1">Belongs to the glutamyl-tRNA reductase family.</text>
</comment>
<comment type="sequence caution" evidence="2">
    <conflict type="erroneous initiation">
        <sequence resource="EMBL-CDS" id="CAJ59648"/>
    </conflict>
</comment>
<feature type="chain" id="PRO_0000335038" description="Glutamyl-tRNA reductase">
    <location>
        <begin position="1"/>
        <end position="470"/>
    </location>
</feature>
<feature type="active site" description="Nucleophile" evidence="1">
    <location>
        <position position="50"/>
    </location>
</feature>
<feature type="binding site" evidence="1">
    <location>
        <begin position="49"/>
        <end position="52"/>
    </location>
    <ligand>
        <name>substrate</name>
    </ligand>
</feature>
<feature type="binding site" evidence="1">
    <location>
        <position position="109"/>
    </location>
    <ligand>
        <name>substrate</name>
    </ligand>
</feature>
<feature type="binding site" evidence="1">
    <location>
        <begin position="114"/>
        <end position="116"/>
    </location>
    <ligand>
        <name>substrate</name>
    </ligand>
</feature>
<feature type="binding site" evidence="1">
    <location>
        <position position="120"/>
    </location>
    <ligand>
        <name>substrate</name>
    </ligand>
</feature>
<feature type="binding site" evidence="1">
    <location>
        <begin position="223"/>
        <end position="228"/>
    </location>
    <ligand>
        <name>NADP(+)</name>
        <dbReference type="ChEBI" id="CHEBI:58349"/>
    </ligand>
</feature>
<feature type="site" description="Important for activity" evidence="1">
    <location>
        <position position="99"/>
    </location>
</feature>
<accession>Q0RS17</accession>
<organism>
    <name type="scientific">Frankia alni (strain DSM 45986 / CECT 9034 / ACN14a)</name>
    <dbReference type="NCBI Taxonomy" id="326424"/>
    <lineage>
        <taxon>Bacteria</taxon>
        <taxon>Bacillati</taxon>
        <taxon>Actinomycetota</taxon>
        <taxon>Actinomycetes</taxon>
        <taxon>Frankiales</taxon>
        <taxon>Frankiaceae</taxon>
        <taxon>Frankia</taxon>
    </lineage>
</organism>
<proteinExistence type="inferred from homology"/>
<dbReference type="EC" id="1.2.1.70" evidence="1"/>
<dbReference type="EMBL" id="CT573213">
    <property type="protein sequence ID" value="CAJ59648.1"/>
    <property type="status" value="ALT_INIT"/>
    <property type="molecule type" value="Genomic_DNA"/>
</dbReference>
<dbReference type="RefSeq" id="WP_041938829.1">
    <property type="nucleotide sequence ID" value="NC_008278.1"/>
</dbReference>
<dbReference type="SMR" id="Q0RS17"/>
<dbReference type="STRING" id="326424.FRAAL0983"/>
<dbReference type="KEGG" id="fal:FRAAL0983"/>
<dbReference type="eggNOG" id="COG0373">
    <property type="taxonomic scope" value="Bacteria"/>
</dbReference>
<dbReference type="HOGENOM" id="CLU_035113_4_0_11"/>
<dbReference type="OrthoDB" id="110209at2"/>
<dbReference type="UniPathway" id="UPA00251">
    <property type="reaction ID" value="UER00316"/>
</dbReference>
<dbReference type="Proteomes" id="UP000000657">
    <property type="component" value="Chromosome"/>
</dbReference>
<dbReference type="GO" id="GO:0008883">
    <property type="term" value="F:glutamyl-tRNA reductase activity"/>
    <property type="evidence" value="ECO:0007669"/>
    <property type="project" value="UniProtKB-UniRule"/>
</dbReference>
<dbReference type="GO" id="GO:0050661">
    <property type="term" value="F:NADP binding"/>
    <property type="evidence" value="ECO:0007669"/>
    <property type="project" value="InterPro"/>
</dbReference>
<dbReference type="GO" id="GO:0019353">
    <property type="term" value="P:protoporphyrinogen IX biosynthetic process from glutamate"/>
    <property type="evidence" value="ECO:0007669"/>
    <property type="project" value="TreeGrafter"/>
</dbReference>
<dbReference type="CDD" id="cd05213">
    <property type="entry name" value="NAD_bind_Glutamyl_tRNA_reduct"/>
    <property type="match status" value="1"/>
</dbReference>
<dbReference type="FunFam" id="3.30.460.30:FF:000001">
    <property type="entry name" value="Glutamyl-tRNA reductase"/>
    <property type="match status" value="1"/>
</dbReference>
<dbReference type="Gene3D" id="3.30.460.30">
    <property type="entry name" value="Glutamyl-tRNA reductase, N-terminal domain"/>
    <property type="match status" value="1"/>
</dbReference>
<dbReference type="Gene3D" id="3.40.50.720">
    <property type="entry name" value="NAD(P)-binding Rossmann-like Domain"/>
    <property type="match status" value="1"/>
</dbReference>
<dbReference type="HAMAP" id="MF_00087">
    <property type="entry name" value="Glu_tRNA_reductase"/>
    <property type="match status" value="1"/>
</dbReference>
<dbReference type="InterPro" id="IPR000343">
    <property type="entry name" value="4pyrrol_synth_GluRdtase"/>
</dbReference>
<dbReference type="InterPro" id="IPR015896">
    <property type="entry name" value="4pyrrol_synth_GluRdtase_dimer"/>
</dbReference>
<dbReference type="InterPro" id="IPR015895">
    <property type="entry name" value="4pyrrol_synth_GluRdtase_N"/>
</dbReference>
<dbReference type="InterPro" id="IPR018214">
    <property type="entry name" value="GluRdtase_CS"/>
</dbReference>
<dbReference type="InterPro" id="IPR036453">
    <property type="entry name" value="GluRdtase_dimer_dom_sf"/>
</dbReference>
<dbReference type="InterPro" id="IPR036343">
    <property type="entry name" value="GluRdtase_N_sf"/>
</dbReference>
<dbReference type="InterPro" id="IPR036291">
    <property type="entry name" value="NAD(P)-bd_dom_sf"/>
</dbReference>
<dbReference type="InterPro" id="IPR006151">
    <property type="entry name" value="Shikm_DH/Glu-tRNA_Rdtase"/>
</dbReference>
<dbReference type="NCBIfam" id="NF000744">
    <property type="entry name" value="PRK00045.1-3"/>
    <property type="match status" value="1"/>
</dbReference>
<dbReference type="PANTHER" id="PTHR43013">
    <property type="entry name" value="GLUTAMYL-TRNA REDUCTASE"/>
    <property type="match status" value="1"/>
</dbReference>
<dbReference type="PANTHER" id="PTHR43013:SF1">
    <property type="entry name" value="GLUTAMYL-TRNA REDUCTASE"/>
    <property type="match status" value="1"/>
</dbReference>
<dbReference type="Pfam" id="PF00745">
    <property type="entry name" value="GlutR_dimer"/>
    <property type="match status" value="1"/>
</dbReference>
<dbReference type="Pfam" id="PF05201">
    <property type="entry name" value="GlutR_N"/>
    <property type="match status" value="1"/>
</dbReference>
<dbReference type="Pfam" id="PF01488">
    <property type="entry name" value="Shikimate_DH"/>
    <property type="match status" value="1"/>
</dbReference>
<dbReference type="PIRSF" id="PIRSF000445">
    <property type="entry name" value="4pyrrol_synth_GluRdtase"/>
    <property type="match status" value="1"/>
</dbReference>
<dbReference type="SUPFAM" id="SSF69742">
    <property type="entry name" value="Glutamyl tRNA-reductase catalytic, N-terminal domain"/>
    <property type="match status" value="1"/>
</dbReference>
<dbReference type="SUPFAM" id="SSF69075">
    <property type="entry name" value="Glutamyl tRNA-reductase dimerization domain"/>
    <property type="match status" value="1"/>
</dbReference>
<dbReference type="SUPFAM" id="SSF51735">
    <property type="entry name" value="NAD(P)-binding Rossmann-fold domains"/>
    <property type="match status" value="1"/>
</dbReference>
<dbReference type="PROSITE" id="PS00747">
    <property type="entry name" value="GLUTR"/>
    <property type="match status" value="1"/>
</dbReference>